<protein>
    <recommendedName>
        <fullName evidence="1">Ribosomal RNA small subunit methyltransferase A</fullName>
        <ecNumber evidence="1">2.1.1.182</ecNumber>
    </recommendedName>
    <alternativeName>
        <fullName evidence="1">16S rRNA (adenine(1518)-N(6)/adenine(1519)-N(6))-dimethyltransferase</fullName>
    </alternativeName>
    <alternativeName>
        <fullName evidence="1">16S rRNA dimethyladenosine transferase</fullName>
    </alternativeName>
    <alternativeName>
        <fullName evidence="1">16S rRNA dimethylase</fullName>
    </alternativeName>
    <alternativeName>
        <fullName evidence="1">S-adenosylmethionine-6-N', N'-adenosyl(rRNA) dimethyltransferase</fullName>
    </alternativeName>
</protein>
<keyword id="KW-0963">Cytoplasm</keyword>
<keyword id="KW-0489">Methyltransferase</keyword>
<keyword id="KW-1185">Reference proteome</keyword>
<keyword id="KW-0694">RNA-binding</keyword>
<keyword id="KW-0698">rRNA processing</keyword>
<keyword id="KW-0949">S-adenosyl-L-methionine</keyword>
<keyword id="KW-0808">Transferase</keyword>
<proteinExistence type="inferred from homology"/>
<evidence type="ECO:0000255" key="1">
    <source>
        <dbReference type="HAMAP-Rule" id="MF_00607"/>
    </source>
</evidence>
<feature type="chain" id="PRO_0000101540" description="Ribosomal RNA small subunit methyltransferase A">
    <location>
        <begin position="1"/>
        <end position="271"/>
    </location>
</feature>
<feature type="binding site" evidence="1">
    <location>
        <position position="11"/>
    </location>
    <ligand>
        <name>S-adenosyl-L-methionine</name>
        <dbReference type="ChEBI" id="CHEBI:59789"/>
    </ligand>
</feature>
<feature type="binding site" evidence="1">
    <location>
        <position position="13"/>
    </location>
    <ligand>
        <name>S-adenosyl-L-methionine</name>
        <dbReference type="ChEBI" id="CHEBI:59789"/>
    </ligand>
</feature>
<feature type="binding site" evidence="1">
    <location>
        <position position="38"/>
    </location>
    <ligand>
        <name>S-adenosyl-L-methionine</name>
        <dbReference type="ChEBI" id="CHEBI:59789"/>
    </ligand>
</feature>
<feature type="binding site" evidence="1">
    <location>
        <position position="58"/>
    </location>
    <ligand>
        <name>S-adenosyl-L-methionine</name>
        <dbReference type="ChEBI" id="CHEBI:59789"/>
    </ligand>
</feature>
<feature type="binding site" evidence="1">
    <location>
        <position position="86"/>
    </location>
    <ligand>
        <name>S-adenosyl-L-methionine</name>
        <dbReference type="ChEBI" id="CHEBI:59789"/>
    </ligand>
</feature>
<feature type="binding site" evidence="1">
    <location>
        <position position="101"/>
    </location>
    <ligand>
        <name>S-adenosyl-L-methionine</name>
        <dbReference type="ChEBI" id="CHEBI:59789"/>
    </ligand>
</feature>
<dbReference type="EC" id="2.1.1.182" evidence="1"/>
<dbReference type="EMBL" id="AE000511">
    <property type="protein sequence ID" value="AAD08470.1"/>
    <property type="molecule type" value="Genomic_DNA"/>
</dbReference>
<dbReference type="PIR" id="G64698">
    <property type="entry name" value="G64698"/>
</dbReference>
<dbReference type="RefSeq" id="NP_208222.1">
    <property type="nucleotide sequence ID" value="NC_000915.1"/>
</dbReference>
<dbReference type="RefSeq" id="WP_000259453.1">
    <property type="nucleotide sequence ID" value="NC_018939.1"/>
</dbReference>
<dbReference type="SMR" id="O25972"/>
<dbReference type="FunCoup" id="O25972">
    <property type="interactions" value="336"/>
</dbReference>
<dbReference type="STRING" id="85962.HP_1431"/>
<dbReference type="PaxDb" id="85962-C694_07400"/>
<dbReference type="EnsemblBacteria" id="AAD08470">
    <property type="protein sequence ID" value="AAD08470"/>
    <property type="gene ID" value="HP_1431"/>
</dbReference>
<dbReference type="KEGG" id="heo:C694_07400"/>
<dbReference type="KEGG" id="hpy:HP_1431"/>
<dbReference type="PATRIC" id="fig|85962.47.peg.1535"/>
<dbReference type="eggNOG" id="COG0030">
    <property type="taxonomic scope" value="Bacteria"/>
</dbReference>
<dbReference type="InParanoid" id="O25972"/>
<dbReference type="OrthoDB" id="9814755at2"/>
<dbReference type="PhylomeDB" id="O25972"/>
<dbReference type="Proteomes" id="UP000000429">
    <property type="component" value="Chromosome"/>
</dbReference>
<dbReference type="GO" id="GO:0005829">
    <property type="term" value="C:cytosol"/>
    <property type="evidence" value="ECO:0000318"/>
    <property type="project" value="GO_Central"/>
</dbReference>
<dbReference type="GO" id="GO:0052908">
    <property type="term" value="F:16S rRNA (adenine(1518)-N(6)/adenine(1519)-N(6))-dimethyltransferase activity"/>
    <property type="evidence" value="ECO:0007669"/>
    <property type="project" value="UniProtKB-EC"/>
</dbReference>
<dbReference type="GO" id="GO:0003723">
    <property type="term" value="F:RNA binding"/>
    <property type="evidence" value="ECO:0007669"/>
    <property type="project" value="UniProtKB-KW"/>
</dbReference>
<dbReference type="GO" id="GO:0000179">
    <property type="term" value="F:rRNA (adenine-N6,N6-)-dimethyltransferase activity"/>
    <property type="evidence" value="ECO:0000318"/>
    <property type="project" value="GO_Central"/>
</dbReference>
<dbReference type="GO" id="GO:0031167">
    <property type="term" value="P:rRNA methylation"/>
    <property type="evidence" value="ECO:0000318"/>
    <property type="project" value="GO_Central"/>
</dbReference>
<dbReference type="CDD" id="cd02440">
    <property type="entry name" value="AdoMet_MTases"/>
    <property type="match status" value="1"/>
</dbReference>
<dbReference type="FunFam" id="1.10.8.100:FF:000010">
    <property type="entry name" value="Ribosomal RNA small subunit methyltransferase A"/>
    <property type="match status" value="1"/>
</dbReference>
<dbReference type="FunFam" id="3.40.50.150:FF:000456">
    <property type="entry name" value="Ribosomal RNA small subunit methyltransferase A"/>
    <property type="match status" value="1"/>
</dbReference>
<dbReference type="Gene3D" id="1.10.8.100">
    <property type="entry name" value="Ribosomal RNA adenine dimethylase-like, domain 2"/>
    <property type="match status" value="1"/>
</dbReference>
<dbReference type="Gene3D" id="3.40.50.150">
    <property type="entry name" value="Vaccinia Virus protein VP39"/>
    <property type="match status" value="1"/>
</dbReference>
<dbReference type="HAMAP" id="MF_00607">
    <property type="entry name" value="16SrRNA_methyltr_A"/>
    <property type="match status" value="1"/>
</dbReference>
<dbReference type="InterPro" id="IPR001737">
    <property type="entry name" value="KsgA/Erm"/>
</dbReference>
<dbReference type="InterPro" id="IPR023165">
    <property type="entry name" value="rRNA_Ade_diMease-like_C"/>
</dbReference>
<dbReference type="InterPro" id="IPR020596">
    <property type="entry name" value="rRNA_Ade_Mease_Trfase_CS"/>
</dbReference>
<dbReference type="InterPro" id="IPR020598">
    <property type="entry name" value="rRNA_Ade_methylase_Trfase_N"/>
</dbReference>
<dbReference type="InterPro" id="IPR011530">
    <property type="entry name" value="rRNA_adenine_dimethylase"/>
</dbReference>
<dbReference type="InterPro" id="IPR029063">
    <property type="entry name" value="SAM-dependent_MTases_sf"/>
</dbReference>
<dbReference type="NCBIfam" id="TIGR00755">
    <property type="entry name" value="ksgA"/>
    <property type="match status" value="1"/>
</dbReference>
<dbReference type="PANTHER" id="PTHR11727">
    <property type="entry name" value="DIMETHYLADENOSINE TRANSFERASE"/>
    <property type="match status" value="1"/>
</dbReference>
<dbReference type="PANTHER" id="PTHR11727:SF7">
    <property type="entry name" value="DIMETHYLADENOSINE TRANSFERASE-RELATED"/>
    <property type="match status" value="1"/>
</dbReference>
<dbReference type="Pfam" id="PF00398">
    <property type="entry name" value="RrnaAD"/>
    <property type="match status" value="1"/>
</dbReference>
<dbReference type="SMART" id="SM00650">
    <property type="entry name" value="rADc"/>
    <property type="match status" value="1"/>
</dbReference>
<dbReference type="SUPFAM" id="SSF53335">
    <property type="entry name" value="S-adenosyl-L-methionine-dependent methyltransferases"/>
    <property type="match status" value="1"/>
</dbReference>
<dbReference type="PROSITE" id="PS01131">
    <property type="entry name" value="RRNA_A_DIMETH"/>
    <property type="match status" value="1"/>
</dbReference>
<dbReference type="PROSITE" id="PS51689">
    <property type="entry name" value="SAM_RNA_A_N6_MT"/>
    <property type="match status" value="1"/>
</dbReference>
<sequence>MVVAKKSLGQHFLTDESFLDRIVNALPPLNPLKLVEIGVGLGDLTLKLLDRYPLKTYEIDSHLCEKMRSKLKAQKKPFKLELVEKDALFLKEEEPYFLISNLPYYIATRLVLNAFKDPKCRGLLVMTQKEVALKFCAKDSQNALSVLAHTIGNATLLFDVPPSAFSPPPKVFSSVFEVIKEPLKEKALASLAQAPFFEEALQKGFEMLEDFLKACFSSPRKTLSNNLKKSVSYREKLDKVLDFLALENQPTSVRASEIKDYLKLLNYLLKG</sequence>
<comment type="function">
    <text evidence="1">Specifically dimethylates two adjacent adenosines (A1518 and A1519) in the loop of a conserved hairpin near the 3'-end of 16S rRNA in the 30S particle. May play a critical role in biogenesis of 30S subunits.</text>
</comment>
<comment type="catalytic activity">
    <reaction evidence="1">
        <text>adenosine(1518)/adenosine(1519) in 16S rRNA + 4 S-adenosyl-L-methionine = N(6)-dimethyladenosine(1518)/N(6)-dimethyladenosine(1519) in 16S rRNA + 4 S-adenosyl-L-homocysteine + 4 H(+)</text>
        <dbReference type="Rhea" id="RHEA:19609"/>
        <dbReference type="Rhea" id="RHEA-COMP:10232"/>
        <dbReference type="Rhea" id="RHEA-COMP:10233"/>
        <dbReference type="ChEBI" id="CHEBI:15378"/>
        <dbReference type="ChEBI" id="CHEBI:57856"/>
        <dbReference type="ChEBI" id="CHEBI:59789"/>
        <dbReference type="ChEBI" id="CHEBI:74411"/>
        <dbReference type="ChEBI" id="CHEBI:74493"/>
        <dbReference type="EC" id="2.1.1.182"/>
    </reaction>
</comment>
<comment type="subcellular location">
    <subcellularLocation>
        <location evidence="1">Cytoplasm</location>
    </subcellularLocation>
</comment>
<comment type="similarity">
    <text evidence="1">Belongs to the class I-like SAM-binding methyltransferase superfamily. rRNA adenine N(6)-methyltransferase family. RsmA subfamily.</text>
</comment>
<name>RSMA_HELPY</name>
<gene>
    <name evidence="1" type="primary">rsmA</name>
    <name evidence="1" type="synonym">ksgA</name>
    <name type="ordered locus">HP_1431</name>
</gene>
<reference key="1">
    <citation type="journal article" date="1997" name="Nature">
        <title>The complete genome sequence of the gastric pathogen Helicobacter pylori.</title>
        <authorList>
            <person name="Tomb J.-F."/>
            <person name="White O."/>
            <person name="Kerlavage A.R."/>
            <person name="Clayton R.A."/>
            <person name="Sutton G.G."/>
            <person name="Fleischmann R.D."/>
            <person name="Ketchum K.A."/>
            <person name="Klenk H.-P."/>
            <person name="Gill S.R."/>
            <person name="Dougherty B.A."/>
            <person name="Nelson K.E."/>
            <person name="Quackenbush J."/>
            <person name="Zhou L."/>
            <person name="Kirkness E.F."/>
            <person name="Peterson S.N."/>
            <person name="Loftus B.J."/>
            <person name="Richardson D.L."/>
            <person name="Dodson R.J."/>
            <person name="Khalak H.G."/>
            <person name="Glodek A."/>
            <person name="McKenney K."/>
            <person name="FitzGerald L.M."/>
            <person name="Lee N."/>
            <person name="Adams M.D."/>
            <person name="Hickey E.K."/>
            <person name="Berg D.E."/>
            <person name="Gocayne J.D."/>
            <person name="Utterback T.R."/>
            <person name="Peterson J.D."/>
            <person name="Kelley J.M."/>
            <person name="Cotton M.D."/>
            <person name="Weidman J.F."/>
            <person name="Fujii C."/>
            <person name="Bowman C."/>
            <person name="Watthey L."/>
            <person name="Wallin E."/>
            <person name="Hayes W.S."/>
            <person name="Borodovsky M."/>
            <person name="Karp P.D."/>
            <person name="Smith H.O."/>
            <person name="Fraser C.M."/>
            <person name="Venter J.C."/>
        </authorList>
    </citation>
    <scope>NUCLEOTIDE SEQUENCE [LARGE SCALE GENOMIC DNA]</scope>
    <source>
        <strain>ATCC 700392 / 26695</strain>
    </source>
</reference>
<organism>
    <name type="scientific">Helicobacter pylori (strain ATCC 700392 / 26695)</name>
    <name type="common">Campylobacter pylori</name>
    <dbReference type="NCBI Taxonomy" id="85962"/>
    <lineage>
        <taxon>Bacteria</taxon>
        <taxon>Pseudomonadati</taxon>
        <taxon>Campylobacterota</taxon>
        <taxon>Epsilonproteobacteria</taxon>
        <taxon>Campylobacterales</taxon>
        <taxon>Helicobacteraceae</taxon>
        <taxon>Helicobacter</taxon>
    </lineage>
</organism>
<accession>O25972</accession>